<protein>
    <recommendedName>
        <fullName evidence="2">Mannitol-specific phosphotransferase enzyme IIA component</fullName>
    </recommendedName>
    <alternativeName>
        <fullName evidence="2">EIIA</fullName>
    </alternativeName>
    <alternativeName>
        <fullName evidence="2">EIII</fullName>
    </alternativeName>
    <alternativeName>
        <fullName evidence="2">PTS system mannitol-specific EIIA component</fullName>
    </alternativeName>
</protein>
<proteinExistence type="evidence at protein level"/>
<gene>
    <name type="primary">mtlF</name>
    <name type="ordered locus">BSU03982</name>
    <name type="ORF">BSU03980</name>
</gene>
<reference key="1">
    <citation type="journal article" date="1997" name="Nature">
        <title>The complete genome sequence of the Gram-positive bacterium Bacillus subtilis.</title>
        <authorList>
            <person name="Kunst F."/>
            <person name="Ogasawara N."/>
            <person name="Moszer I."/>
            <person name="Albertini A.M."/>
            <person name="Alloni G."/>
            <person name="Azevedo V."/>
            <person name="Bertero M.G."/>
            <person name="Bessieres P."/>
            <person name="Bolotin A."/>
            <person name="Borchert S."/>
            <person name="Borriss R."/>
            <person name="Boursier L."/>
            <person name="Brans A."/>
            <person name="Braun M."/>
            <person name="Brignell S.C."/>
            <person name="Bron S."/>
            <person name="Brouillet S."/>
            <person name="Bruschi C.V."/>
            <person name="Caldwell B."/>
            <person name="Capuano V."/>
            <person name="Carter N.M."/>
            <person name="Choi S.-K."/>
            <person name="Codani J.-J."/>
            <person name="Connerton I.F."/>
            <person name="Cummings N.J."/>
            <person name="Daniel R.A."/>
            <person name="Denizot F."/>
            <person name="Devine K.M."/>
            <person name="Duesterhoeft A."/>
            <person name="Ehrlich S.D."/>
            <person name="Emmerson P.T."/>
            <person name="Entian K.-D."/>
            <person name="Errington J."/>
            <person name="Fabret C."/>
            <person name="Ferrari E."/>
            <person name="Foulger D."/>
            <person name="Fritz C."/>
            <person name="Fujita M."/>
            <person name="Fujita Y."/>
            <person name="Fuma S."/>
            <person name="Galizzi A."/>
            <person name="Galleron N."/>
            <person name="Ghim S.-Y."/>
            <person name="Glaser P."/>
            <person name="Goffeau A."/>
            <person name="Golightly E.J."/>
            <person name="Grandi G."/>
            <person name="Guiseppi G."/>
            <person name="Guy B.J."/>
            <person name="Haga K."/>
            <person name="Haiech J."/>
            <person name="Harwood C.R."/>
            <person name="Henaut A."/>
            <person name="Hilbert H."/>
            <person name="Holsappel S."/>
            <person name="Hosono S."/>
            <person name="Hullo M.-F."/>
            <person name="Itaya M."/>
            <person name="Jones L.-M."/>
            <person name="Joris B."/>
            <person name="Karamata D."/>
            <person name="Kasahara Y."/>
            <person name="Klaerr-Blanchard M."/>
            <person name="Klein C."/>
            <person name="Kobayashi Y."/>
            <person name="Koetter P."/>
            <person name="Koningstein G."/>
            <person name="Krogh S."/>
            <person name="Kumano M."/>
            <person name="Kurita K."/>
            <person name="Lapidus A."/>
            <person name="Lardinois S."/>
            <person name="Lauber J."/>
            <person name="Lazarevic V."/>
            <person name="Lee S.-M."/>
            <person name="Levine A."/>
            <person name="Liu H."/>
            <person name="Masuda S."/>
            <person name="Mauel C."/>
            <person name="Medigue C."/>
            <person name="Medina N."/>
            <person name="Mellado R.P."/>
            <person name="Mizuno M."/>
            <person name="Moestl D."/>
            <person name="Nakai S."/>
            <person name="Noback M."/>
            <person name="Noone D."/>
            <person name="O'Reilly M."/>
            <person name="Ogawa K."/>
            <person name="Ogiwara A."/>
            <person name="Oudega B."/>
            <person name="Park S.-H."/>
            <person name="Parro V."/>
            <person name="Pohl T.M."/>
            <person name="Portetelle D."/>
            <person name="Porwollik S."/>
            <person name="Prescott A.M."/>
            <person name="Presecan E."/>
            <person name="Pujic P."/>
            <person name="Purnelle B."/>
            <person name="Rapoport G."/>
            <person name="Rey M."/>
            <person name="Reynolds S."/>
            <person name="Rieger M."/>
            <person name="Rivolta C."/>
            <person name="Rocha E."/>
            <person name="Roche B."/>
            <person name="Rose M."/>
            <person name="Sadaie Y."/>
            <person name="Sato T."/>
            <person name="Scanlan E."/>
            <person name="Schleich S."/>
            <person name="Schroeter R."/>
            <person name="Scoffone F."/>
            <person name="Sekiguchi J."/>
            <person name="Sekowska A."/>
            <person name="Seror S.J."/>
            <person name="Serror P."/>
            <person name="Shin B.-S."/>
            <person name="Soldo B."/>
            <person name="Sorokin A."/>
            <person name="Tacconi E."/>
            <person name="Takagi T."/>
            <person name="Takahashi H."/>
            <person name="Takemaru K."/>
            <person name="Takeuchi M."/>
            <person name="Tamakoshi A."/>
            <person name="Tanaka T."/>
            <person name="Terpstra P."/>
            <person name="Tognoni A."/>
            <person name="Tosato V."/>
            <person name="Uchiyama S."/>
            <person name="Vandenbol M."/>
            <person name="Vannier F."/>
            <person name="Vassarotti A."/>
            <person name="Viari A."/>
            <person name="Wambutt R."/>
            <person name="Wedler E."/>
            <person name="Wedler H."/>
            <person name="Weitzenegger T."/>
            <person name="Winters P."/>
            <person name="Wipat A."/>
            <person name="Yamamoto H."/>
            <person name="Yamane K."/>
            <person name="Yasumoto K."/>
            <person name="Yata K."/>
            <person name="Yoshida K."/>
            <person name="Yoshikawa H.-F."/>
            <person name="Zumstein E."/>
            <person name="Yoshikawa H."/>
            <person name="Danchin A."/>
        </authorList>
    </citation>
    <scope>NUCLEOTIDE SEQUENCE [LARGE SCALE GENOMIC DNA]</scope>
    <source>
        <strain>168</strain>
    </source>
</reference>
<reference key="2">
    <citation type="journal article" date="2007" name="Mol. Cell. Proteomics">
        <title>The serine/threonine/tyrosine phosphoproteome of the model bacterium Bacillus subtilis.</title>
        <authorList>
            <person name="Macek B."/>
            <person name="Mijakovic I."/>
            <person name="Olsen J.V."/>
            <person name="Gnad F."/>
            <person name="Kumar C."/>
            <person name="Jensen P.R."/>
            <person name="Mann M."/>
        </authorList>
    </citation>
    <scope>PHOSPHORYLATION [LARGE SCALE ANALYSIS] AT SER-74</scope>
    <scope>IDENTIFICATION BY MASS SPECTROMETRY</scope>
    <source>
        <strain>168</strain>
    </source>
</reference>
<dbReference type="EMBL" id="AL009126">
    <property type="protein sequence ID" value="CAX52549.1"/>
    <property type="molecule type" value="Genomic_DNA"/>
</dbReference>
<dbReference type="RefSeq" id="WP_003246714.1">
    <property type="nucleotide sequence ID" value="NZ_OZ025638.1"/>
</dbReference>
<dbReference type="RefSeq" id="YP_003097678.1">
    <property type="nucleotide sequence ID" value="NC_000964.3"/>
</dbReference>
<dbReference type="SMR" id="C0H3V2"/>
<dbReference type="FunCoup" id="C0H3V2">
    <property type="interactions" value="79"/>
</dbReference>
<dbReference type="STRING" id="224308.BSU03982"/>
<dbReference type="TCDB" id="4.A.2.1.5">
    <property type="family name" value="the pts fructose-mannitol (fru) family"/>
</dbReference>
<dbReference type="iPTMnet" id="C0H3V2"/>
<dbReference type="jPOST" id="C0H3V2"/>
<dbReference type="PaxDb" id="224308-BSU03982"/>
<dbReference type="EnsemblBacteria" id="CAX52549">
    <property type="protein sequence ID" value="CAX52549"/>
    <property type="gene ID" value="BSU_03982"/>
</dbReference>
<dbReference type="GeneID" id="8303136"/>
<dbReference type="KEGG" id="bsu:BSU03982"/>
<dbReference type="PATRIC" id="fig|224308.179.peg.422"/>
<dbReference type="eggNOG" id="COG4668">
    <property type="taxonomic scope" value="Bacteria"/>
</dbReference>
<dbReference type="InParanoid" id="C0H3V2"/>
<dbReference type="OrthoDB" id="1640042at2"/>
<dbReference type="PhylomeDB" id="C0H3V2"/>
<dbReference type="BioCyc" id="BSUB:BSU03982-MONOMER"/>
<dbReference type="Proteomes" id="UP000001570">
    <property type="component" value="Chromosome"/>
</dbReference>
<dbReference type="GO" id="GO:0005737">
    <property type="term" value="C:cytoplasm"/>
    <property type="evidence" value="ECO:0007669"/>
    <property type="project" value="UniProtKB-SubCell"/>
</dbReference>
<dbReference type="GO" id="GO:0005886">
    <property type="term" value="C:plasma membrane"/>
    <property type="evidence" value="ECO:0000318"/>
    <property type="project" value="GO_Central"/>
</dbReference>
<dbReference type="GO" id="GO:0016301">
    <property type="term" value="F:kinase activity"/>
    <property type="evidence" value="ECO:0007669"/>
    <property type="project" value="UniProtKB-KW"/>
</dbReference>
<dbReference type="GO" id="GO:0090563">
    <property type="term" value="F:protein-phosphocysteine-sugar phosphotransferase activity"/>
    <property type="evidence" value="ECO:0000318"/>
    <property type="project" value="GO_Central"/>
</dbReference>
<dbReference type="GO" id="GO:0009401">
    <property type="term" value="P:phosphoenolpyruvate-dependent sugar phosphotransferase system"/>
    <property type="evidence" value="ECO:0000318"/>
    <property type="project" value="GO_Central"/>
</dbReference>
<dbReference type="CDD" id="cd00211">
    <property type="entry name" value="PTS_IIA_fru"/>
    <property type="match status" value="1"/>
</dbReference>
<dbReference type="Gene3D" id="3.40.930.10">
    <property type="entry name" value="Mannitol-specific EII, Chain A"/>
    <property type="match status" value="1"/>
</dbReference>
<dbReference type="InterPro" id="IPR016152">
    <property type="entry name" value="PTrfase/Anion_transptr"/>
</dbReference>
<dbReference type="InterPro" id="IPR002178">
    <property type="entry name" value="PTS_EIIA_type-2_dom"/>
</dbReference>
<dbReference type="InterPro" id="IPR050893">
    <property type="entry name" value="Sugar_PTS"/>
</dbReference>
<dbReference type="PANTHER" id="PTHR30181">
    <property type="entry name" value="MANNITOL PERMEASE IIC COMPONENT"/>
    <property type="match status" value="1"/>
</dbReference>
<dbReference type="PANTHER" id="PTHR30181:SF2">
    <property type="entry name" value="PTS SYSTEM MANNITOL-SPECIFIC EIICBA COMPONENT"/>
    <property type="match status" value="1"/>
</dbReference>
<dbReference type="Pfam" id="PF00359">
    <property type="entry name" value="PTS_EIIA_2"/>
    <property type="match status" value="1"/>
</dbReference>
<dbReference type="SUPFAM" id="SSF55804">
    <property type="entry name" value="Phoshotransferase/anion transport protein"/>
    <property type="match status" value="1"/>
</dbReference>
<dbReference type="PROSITE" id="PS51094">
    <property type="entry name" value="PTS_EIIA_TYPE_2"/>
    <property type="match status" value="1"/>
</dbReference>
<dbReference type="PROSITE" id="PS00372">
    <property type="entry name" value="PTS_EIIA_TYPE_2_HIS"/>
    <property type="match status" value="1"/>
</dbReference>
<organism>
    <name type="scientific">Bacillus subtilis (strain 168)</name>
    <dbReference type="NCBI Taxonomy" id="224308"/>
    <lineage>
        <taxon>Bacteria</taxon>
        <taxon>Bacillati</taxon>
        <taxon>Bacillota</taxon>
        <taxon>Bacilli</taxon>
        <taxon>Bacillales</taxon>
        <taxon>Bacillaceae</taxon>
        <taxon>Bacillus</taxon>
    </lineage>
</organism>
<comment type="function">
    <text evidence="2">The phosphoenolpyruvate-dependent sugar phosphotransferase system (sugar PTS), a major carbohydrate active transport system, catalyzes the phosphorylation of incoming sugar substrates concomitantly with their translocation across the cell membrane. The enzyme II CmtAB PTS system is involved in D-mannitol transport.</text>
</comment>
<comment type="subcellular location">
    <subcellularLocation>
        <location evidence="5">Cytoplasm</location>
    </subcellularLocation>
</comment>
<comment type="domain">
    <text evidence="3">The PTS EIIA type-2 domain is phosphorylated by phospho-HPr on a histidyl residue. Then, it transfers the phosphoryl group to the PTS EIIB type-2 domain.</text>
</comment>
<accession>C0H3V2</accession>
<keyword id="KW-0963">Cytoplasm</keyword>
<keyword id="KW-0418">Kinase</keyword>
<keyword id="KW-0597">Phosphoprotein</keyword>
<keyword id="KW-0598">Phosphotransferase system</keyword>
<keyword id="KW-1185">Reference proteome</keyword>
<keyword id="KW-0762">Sugar transport</keyword>
<keyword id="KW-0808">Transferase</keyword>
<keyword id="KW-0813">Transport</keyword>
<name>PTMA_BACSU</name>
<evidence type="ECO:0000250" key="1">
    <source>
        <dbReference type="UniProtKB" id="P00550"/>
    </source>
</evidence>
<evidence type="ECO:0000250" key="2">
    <source>
        <dbReference type="UniProtKB" id="P0A0E0"/>
    </source>
</evidence>
<evidence type="ECO:0000255" key="3">
    <source>
        <dbReference type="PROSITE-ProRule" id="PRU00417"/>
    </source>
</evidence>
<evidence type="ECO:0000269" key="4">
    <source>
    </source>
</evidence>
<evidence type="ECO:0000305" key="5"/>
<feature type="chain" id="PRO_0000376996" description="Mannitol-specific phosphotransferase enzyme IIA component">
    <location>
        <begin position="1"/>
        <end position="143"/>
    </location>
</feature>
<feature type="domain" description="PTS EIIA type-2" evidence="3">
    <location>
        <begin position="2"/>
        <end position="142"/>
    </location>
</feature>
<feature type="active site" description="Tele-phosphohistidine intermediate" evidence="3">
    <location>
        <position position="62"/>
    </location>
</feature>
<feature type="modified residue" description="Phosphohistidine; by HPr" evidence="1 2">
    <location>
        <position position="62"/>
    </location>
</feature>
<feature type="modified residue" description="Phosphoserine" evidence="4">
    <location>
        <position position="74"/>
    </location>
</feature>
<sequence length="143" mass="15747">MQVLAKENIKLNQTVSSKEEAIKLAGQTLIDNGYVTEDYISKMFEREETSSTFMGNFIAIPHGTEEAKSEVLHSGISIIQIPEGVEYGEGNTAKVVFGIAGKNNEHLDILSNIAIICSEEENIERLISAKSEEDLIAIFNEVN</sequence>